<accession>Q747I1</accession>
<protein>
    <recommendedName>
        <fullName evidence="1">Porphobilinogen deaminase</fullName>
        <shortName evidence="1">PBG</shortName>
        <ecNumber evidence="1">2.5.1.61</ecNumber>
    </recommendedName>
    <alternativeName>
        <fullName evidence="1">Hydroxymethylbilane synthase</fullName>
        <shortName evidence="1">HMBS</shortName>
    </alternativeName>
    <alternativeName>
        <fullName evidence="1">Pre-uroporphyrinogen synthase</fullName>
    </alternativeName>
</protein>
<evidence type="ECO:0000255" key="1">
    <source>
        <dbReference type="HAMAP-Rule" id="MF_00260"/>
    </source>
</evidence>
<feature type="chain" id="PRO_0000142942" description="Porphobilinogen deaminase">
    <location>
        <begin position="1"/>
        <end position="318"/>
    </location>
</feature>
<feature type="modified residue" description="S-(dipyrrolylmethanemethyl)cysteine" evidence="1">
    <location>
        <position position="241"/>
    </location>
</feature>
<sequence length="318" mass="34707">MALNRLRIGTRASQLALWQANWVKSELEKRYPGMEVELVKIKTIGDKILDVPLAQVGGKGLFVKEIEEAMLRGEIDIAVHSMKDVPTEFPEGLGLVCITEREDPRDAFISNGVTFANLPQGAKIGTSALRRQAQLLKVRPDLEMVIIRGNVETRIRKLTEDKLDAVILAAAGLKRLGFTDVVTEYLPVDLSLPAIGQGALGLECRLDDQAVRETIDFFNHPDTAHAVRAERALLWRCEGGCQVPIAAHGQVSGDSLTLTGFIASVDGTRSVKESISGPVTDCEKLGIALAEKLLADGGHEILAEVYQREVSREKEIPV</sequence>
<reference key="1">
    <citation type="journal article" date="2003" name="Science">
        <title>Genome of Geobacter sulfurreducens: metal reduction in subsurface environments.</title>
        <authorList>
            <person name="Methe B.A."/>
            <person name="Nelson K.E."/>
            <person name="Eisen J.A."/>
            <person name="Paulsen I.T."/>
            <person name="Nelson W.C."/>
            <person name="Heidelberg J.F."/>
            <person name="Wu D."/>
            <person name="Wu M."/>
            <person name="Ward N.L."/>
            <person name="Beanan M.J."/>
            <person name="Dodson R.J."/>
            <person name="Madupu R."/>
            <person name="Brinkac L.M."/>
            <person name="Daugherty S.C."/>
            <person name="DeBoy R.T."/>
            <person name="Durkin A.S."/>
            <person name="Gwinn M.L."/>
            <person name="Kolonay J.F."/>
            <person name="Sullivan S.A."/>
            <person name="Haft D.H."/>
            <person name="Selengut J."/>
            <person name="Davidsen T.M."/>
            <person name="Zafar N."/>
            <person name="White O."/>
            <person name="Tran B."/>
            <person name="Romero C."/>
            <person name="Forberger H.A."/>
            <person name="Weidman J.F."/>
            <person name="Khouri H.M."/>
            <person name="Feldblyum T.V."/>
            <person name="Utterback T.R."/>
            <person name="Van Aken S.E."/>
            <person name="Lovley D.R."/>
            <person name="Fraser C.M."/>
        </authorList>
    </citation>
    <scope>NUCLEOTIDE SEQUENCE [LARGE SCALE GENOMIC DNA]</scope>
    <source>
        <strain>ATCC 51573 / DSM 12127 / PCA</strain>
    </source>
</reference>
<comment type="function">
    <text evidence="1">Tetrapolymerization of the monopyrrole PBG into the hydroxymethylbilane pre-uroporphyrinogen in several discrete steps.</text>
</comment>
<comment type="catalytic activity">
    <reaction evidence="1">
        <text>4 porphobilinogen + H2O = hydroxymethylbilane + 4 NH4(+)</text>
        <dbReference type="Rhea" id="RHEA:13185"/>
        <dbReference type="ChEBI" id="CHEBI:15377"/>
        <dbReference type="ChEBI" id="CHEBI:28938"/>
        <dbReference type="ChEBI" id="CHEBI:57845"/>
        <dbReference type="ChEBI" id="CHEBI:58126"/>
        <dbReference type="EC" id="2.5.1.61"/>
    </reaction>
</comment>
<comment type="cofactor">
    <cofactor evidence="1">
        <name>dipyrromethane</name>
        <dbReference type="ChEBI" id="CHEBI:60342"/>
    </cofactor>
    <text evidence="1">Binds 1 dipyrromethane group covalently.</text>
</comment>
<comment type="pathway">
    <text evidence="1">Porphyrin-containing compound metabolism; protoporphyrin-IX biosynthesis; coproporphyrinogen-III from 5-aminolevulinate: step 2/4.</text>
</comment>
<comment type="subunit">
    <text evidence="1">Monomer.</text>
</comment>
<comment type="miscellaneous">
    <text evidence="1">The porphobilinogen subunits are added to the dipyrromethane group.</text>
</comment>
<comment type="similarity">
    <text evidence="1">Belongs to the HMBS family.</text>
</comment>
<name>HEM3_GEOSL</name>
<dbReference type="EC" id="2.5.1.61" evidence="1"/>
<dbReference type="EMBL" id="AE017180">
    <property type="protein sequence ID" value="AAR36675.1"/>
    <property type="molecule type" value="Genomic_DNA"/>
</dbReference>
<dbReference type="RefSeq" id="NP_954325.1">
    <property type="nucleotide sequence ID" value="NC_002939.5"/>
</dbReference>
<dbReference type="RefSeq" id="WP_010943896.1">
    <property type="nucleotide sequence ID" value="NC_002939.5"/>
</dbReference>
<dbReference type="SMR" id="Q747I1"/>
<dbReference type="FunCoup" id="Q747I1">
    <property type="interactions" value="532"/>
</dbReference>
<dbReference type="STRING" id="243231.GSU3285"/>
<dbReference type="EnsemblBacteria" id="AAR36675">
    <property type="protein sequence ID" value="AAR36675"/>
    <property type="gene ID" value="GSU3285"/>
</dbReference>
<dbReference type="KEGG" id="gsu:GSU3285"/>
<dbReference type="PATRIC" id="fig|243231.5.peg.3301"/>
<dbReference type="eggNOG" id="COG0181">
    <property type="taxonomic scope" value="Bacteria"/>
</dbReference>
<dbReference type="HOGENOM" id="CLU_019704_1_0_7"/>
<dbReference type="InParanoid" id="Q747I1"/>
<dbReference type="OrthoDB" id="9810298at2"/>
<dbReference type="UniPathway" id="UPA00251">
    <property type="reaction ID" value="UER00319"/>
</dbReference>
<dbReference type="Proteomes" id="UP000000577">
    <property type="component" value="Chromosome"/>
</dbReference>
<dbReference type="GO" id="GO:0005737">
    <property type="term" value="C:cytoplasm"/>
    <property type="evidence" value="ECO:0000318"/>
    <property type="project" value="GO_Central"/>
</dbReference>
<dbReference type="GO" id="GO:0004418">
    <property type="term" value="F:hydroxymethylbilane synthase activity"/>
    <property type="evidence" value="ECO:0000318"/>
    <property type="project" value="GO_Central"/>
</dbReference>
<dbReference type="GO" id="GO:0006783">
    <property type="term" value="P:heme biosynthetic process"/>
    <property type="evidence" value="ECO:0000318"/>
    <property type="project" value="GO_Central"/>
</dbReference>
<dbReference type="GO" id="GO:0006782">
    <property type="term" value="P:protoporphyrinogen IX biosynthetic process"/>
    <property type="evidence" value="ECO:0007669"/>
    <property type="project" value="UniProtKB-UniRule"/>
</dbReference>
<dbReference type="CDD" id="cd13646">
    <property type="entry name" value="PBP2_EcHMBS_like"/>
    <property type="match status" value="1"/>
</dbReference>
<dbReference type="FunFam" id="3.30.160.40:FF:000002">
    <property type="entry name" value="Porphobilinogen deaminase"/>
    <property type="match status" value="1"/>
</dbReference>
<dbReference type="FunFam" id="3.40.190.10:FF:000004">
    <property type="entry name" value="Porphobilinogen deaminase"/>
    <property type="match status" value="1"/>
</dbReference>
<dbReference type="FunFam" id="3.40.190.10:FF:000005">
    <property type="entry name" value="Porphobilinogen deaminase"/>
    <property type="match status" value="1"/>
</dbReference>
<dbReference type="Gene3D" id="3.40.190.10">
    <property type="entry name" value="Periplasmic binding protein-like II"/>
    <property type="match status" value="2"/>
</dbReference>
<dbReference type="Gene3D" id="3.30.160.40">
    <property type="entry name" value="Porphobilinogen deaminase, C-terminal domain"/>
    <property type="match status" value="1"/>
</dbReference>
<dbReference type="HAMAP" id="MF_00260">
    <property type="entry name" value="Porphobil_deam"/>
    <property type="match status" value="1"/>
</dbReference>
<dbReference type="InterPro" id="IPR000860">
    <property type="entry name" value="HemC"/>
</dbReference>
<dbReference type="InterPro" id="IPR022419">
    <property type="entry name" value="Porphobilin_deaminase_cofac_BS"/>
</dbReference>
<dbReference type="InterPro" id="IPR022417">
    <property type="entry name" value="Porphobilin_deaminase_N"/>
</dbReference>
<dbReference type="InterPro" id="IPR022418">
    <property type="entry name" value="Porphobilinogen_deaminase_C"/>
</dbReference>
<dbReference type="InterPro" id="IPR036803">
    <property type="entry name" value="Porphobilinogen_deaminase_C_sf"/>
</dbReference>
<dbReference type="NCBIfam" id="TIGR00212">
    <property type="entry name" value="hemC"/>
    <property type="match status" value="1"/>
</dbReference>
<dbReference type="PANTHER" id="PTHR11557">
    <property type="entry name" value="PORPHOBILINOGEN DEAMINASE"/>
    <property type="match status" value="1"/>
</dbReference>
<dbReference type="PANTHER" id="PTHR11557:SF0">
    <property type="entry name" value="PORPHOBILINOGEN DEAMINASE"/>
    <property type="match status" value="1"/>
</dbReference>
<dbReference type="Pfam" id="PF01379">
    <property type="entry name" value="Porphobil_deam"/>
    <property type="match status" value="1"/>
</dbReference>
<dbReference type="Pfam" id="PF03900">
    <property type="entry name" value="Porphobil_deamC"/>
    <property type="match status" value="1"/>
</dbReference>
<dbReference type="PIRSF" id="PIRSF001438">
    <property type="entry name" value="4pyrrol_synth_OHMeBilane_synth"/>
    <property type="match status" value="1"/>
</dbReference>
<dbReference type="PRINTS" id="PR00151">
    <property type="entry name" value="PORPHBDMNASE"/>
</dbReference>
<dbReference type="SUPFAM" id="SSF53850">
    <property type="entry name" value="Periplasmic binding protein-like II"/>
    <property type="match status" value="1"/>
</dbReference>
<dbReference type="SUPFAM" id="SSF54782">
    <property type="entry name" value="Porphobilinogen deaminase (hydroxymethylbilane synthase), C-terminal domain"/>
    <property type="match status" value="1"/>
</dbReference>
<dbReference type="PROSITE" id="PS00533">
    <property type="entry name" value="PORPHOBILINOGEN_DEAM"/>
    <property type="match status" value="1"/>
</dbReference>
<organism>
    <name type="scientific">Geobacter sulfurreducens (strain ATCC 51573 / DSM 12127 / PCA)</name>
    <dbReference type="NCBI Taxonomy" id="243231"/>
    <lineage>
        <taxon>Bacteria</taxon>
        <taxon>Pseudomonadati</taxon>
        <taxon>Thermodesulfobacteriota</taxon>
        <taxon>Desulfuromonadia</taxon>
        <taxon>Geobacterales</taxon>
        <taxon>Geobacteraceae</taxon>
        <taxon>Geobacter</taxon>
    </lineage>
</organism>
<proteinExistence type="inferred from homology"/>
<keyword id="KW-0627">Porphyrin biosynthesis</keyword>
<keyword id="KW-1185">Reference proteome</keyword>
<keyword id="KW-0808">Transferase</keyword>
<gene>
    <name evidence="1" type="primary">hemC</name>
    <name type="ordered locus">GSU3285</name>
</gene>